<accession>Q8TXZ2</accession>
<sequence length="324" mass="37152">MDVEERLKLVTRNAVEVVTEEELRQLLEEKEEPVAYVGFEPSGKVHLGHKLVIDKMIDLQEAGFHVIILLADLHAYLNEKGTLEEVRELADYNRRCFLAMGLDPNKTEFVLGSEFQLDEDYALDVYRMARHTTMRRARRSMDMIARSEENPPVSQVVYPLMQALDIVHLNVDLAVGGLEQRKIHMLARDVLPKLGYDSPTCLHTPIIHGLDGDEKMSSSKNNFIAVDDEPEVIREKLRKAYCPAREAEGNPILEIYRYFIFREYDEVTIERPEKYGGDVTYTSYEELERDFVDGELHPLDLKENAAGYLSEILKPVRKAVSAPS</sequence>
<proteinExistence type="inferred from homology"/>
<reference key="1">
    <citation type="journal article" date="2002" name="Proc. Natl. Acad. Sci. U.S.A.">
        <title>The complete genome of hyperthermophile Methanopyrus kandleri AV19 and monophyly of archaeal methanogens.</title>
        <authorList>
            <person name="Slesarev A.I."/>
            <person name="Mezhevaya K.V."/>
            <person name="Makarova K.S."/>
            <person name="Polushin N.N."/>
            <person name="Shcherbinina O.V."/>
            <person name="Shakhova V.V."/>
            <person name="Belova G.I."/>
            <person name="Aravind L."/>
            <person name="Natale D.A."/>
            <person name="Rogozin I.B."/>
            <person name="Tatusov R.L."/>
            <person name="Wolf Y.I."/>
            <person name="Stetter K.O."/>
            <person name="Malykh A.G."/>
            <person name="Koonin E.V."/>
            <person name="Kozyavkin S.A."/>
        </authorList>
    </citation>
    <scope>NUCLEOTIDE SEQUENCE [LARGE SCALE GENOMIC DNA]</scope>
    <source>
        <strain>AV19 / DSM 6324 / JCM 9639 / NBRC 100938</strain>
    </source>
</reference>
<dbReference type="EC" id="6.1.1.1" evidence="1"/>
<dbReference type="EMBL" id="AE009439">
    <property type="protein sequence ID" value="AAM01731.1"/>
    <property type="molecule type" value="Genomic_DNA"/>
</dbReference>
<dbReference type="RefSeq" id="WP_011018886.1">
    <property type="nucleotide sequence ID" value="NC_003551.1"/>
</dbReference>
<dbReference type="SMR" id="Q8TXZ2"/>
<dbReference type="FunCoup" id="Q8TXZ2">
    <property type="interactions" value="212"/>
</dbReference>
<dbReference type="STRING" id="190192.MK0516"/>
<dbReference type="PaxDb" id="190192-MK0516"/>
<dbReference type="EnsemblBacteria" id="AAM01731">
    <property type="protein sequence ID" value="AAM01731"/>
    <property type="gene ID" value="MK0516"/>
</dbReference>
<dbReference type="GeneID" id="1476617"/>
<dbReference type="KEGG" id="mka:MK0516"/>
<dbReference type="PATRIC" id="fig|190192.8.peg.549"/>
<dbReference type="HOGENOM" id="CLU_035267_0_1_2"/>
<dbReference type="InParanoid" id="Q8TXZ2"/>
<dbReference type="OrthoDB" id="8389at2157"/>
<dbReference type="Proteomes" id="UP000001826">
    <property type="component" value="Chromosome"/>
</dbReference>
<dbReference type="GO" id="GO:0005737">
    <property type="term" value="C:cytoplasm"/>
    <property type="evidence" value="ECO:0007669"/>
    <property type="project" value="UniProtKB-SubCell"/>
</dbReference>
<dbReference type="GO" id="GO:0005524">
    <property type="term" value="F:ATP binding"/>
    <property type="evidence" value="ECO:0007669"/>
    <property type="project" value="UniProtKB-UniRule"/>
</dbReference>
<dbReference type="GO" id="GO:0004831">
    <property type="term" value="F:tyrosine-tRNA ligase activity"/>
    <property type="evidence" value="ECO:0007669"/>
    <property type="project" value="UniProtKB-UniRule"/>
</dbReference>
<dbReference type="GO" id="GO:0006437">
    <property type="term" value="P:tyrosyl-tRNA aminoacylation"/>
    <property type="evidence" value="ECO:0007669"/>
    <property type="project" value="UniProtKB-UniRule"/>
</dbReference>
<dbReference type="CDD" id="cd00805">
    <property type="entry name" value="TyrRS_core"/>
    <property type="match status" value="1"/>
</dbReference>
<dbReference type="Gene3D" id="3.40.50.620">
    <property type="entry name" value="HUPs"/>
    <property type="match status" value="1"/>
</dbReference>
<dbReference type="Gene3D" id="1.10.240.10">
    <property type="entry name" value="Tyrosyl-Transfer RNA Synthetase"/>
    <property type="match status" value="1"/>
</dbReference>
<dbReference type="HAMAP" id="MF_02008">
    <property type="entry name" value="Tyr_tRNA_synth_type3"/>
    <property type="match status" value="1"/>
</dbReference>
<dbReference type="InterPro" id="IPR002305">
    <property type="entry name" value="aa-tRNA-synth_Ic"/>
</dbReference>
<dbReference type="InterPro" id="IPR014729">
    <property type="entry name" value="Rossmann-like_a/b/a_fold"/>
</dbReference>
<dbReference type="InterPro" id="IPR002307">
    <property type="entry name" value="Tyr-tRNA-ligase"/>
</dbReference>
<dbReference type="InterPro" id="IPR023684">
    <property type="entry name" value="Tyr-tRNA-ligase_3"/>
</dbReference>
<dbReference type="InterPro" id="IPR023617">
    <property type="entry name" value="Tyr-tRNA-ligase_arc/euk-type"/>
</dbReference>
<dbReference type="InterPro" id="IPR050489">
    <property type="entry name" value="Tyr-tRNA_synthase"/>
</dbReference>
<dbReference type="NCBIfam" id="NF006330">
    <property type="entry name" value="PRK08560.1"/>
    <property type="match status" value="1"/>
</dbReference>
<dbReference type="NCBIfam" id="TIGR00234">
    <property type="entry name" value="tyrS"/>
    <property type="match status" value="1"/>
</dbReference>
<dbReference type="PANTHER" id="PTHR46264:SF4">
    <property type="entry name" value="TYROSINE--TRNA LIGASE, CYTOPLASMIC"/>
    <property type="match status" value="1"/>
</dbReference>
<dbReference type="PANTHER" id="PTHR46264">
    <property type="entry name" value="TYROSINE-TRNA LIGASE"/>
    <property type="match status" value="1"/>
</dbReference>
<dbReference type="Pfam" id="PF00579">
    <property type="entry name" value="tRNA-synt_1b"/>
    <property type="match status" value="1"/>
</dbReference>
<dbReference type="PIRSF" id="PIRSF006588">
    <property type="entry name" value="TyrRS_arch_euk"/>
    <property type="match status" value="1"/>
</dbReference>
<dbReference type="PRINTS" id="PR01040">
    <property type="entry name" value="TRNASYNTHTYR"/>
</dbReference>
<dbReference type="SUPFAM" id="SSF52374">
    <property type="entry name" value="Nucleotidylyl transferase"/>
    <property type="match status" value="1"/>
</dbReference>
<gene>
    <name evidence="1" type="primary">tyrS</name>
    <name type="ordered locus">MK0516</name>
</gene>
<feature type="chain" id="PRO_0000240255" description="Tyrosine--tRNA ligase">
    <location>
        <begin position="1"/>
        <end position="324"/>
    </location>
</feature>
<feature type="short sequence motif" description="'HIGH' region">
    <location>
        <begin position="41"/>
        <end position="49"/>
    </location>
</feature>
<feature type="short sequence motif" description="'KMSKS' region">
    <location>
        <begin position="215"/>
        <end position="219"/>
    </location>
</feature>
<feature type="binding site" evidence="1">
    <location>
        <position position="36"/>
    </location>
    <ligand>
        <name>L-tyrosine</name>
        <dbReference type="ChEBI" id="CHEBI:58315"/>
    </ligand>
</feature>
<feature type="binding site" evidence="1">
    <location>
        <position position="158"/>
    </location>
    <ligand>
        <name>L-tyrosine</name>
        <dbReference type="ChEBI" id="CHEBI:58315"/>
    </ligand>
</feature>
<feature type="binding site" evidence="1">
    <location>
        <position position="162"/>
    </location>
    <ligand>
        <name>L-tyrosine</name>
        <dbReference type="ChEBI" id="CHEBI:58315"/>
    </ligand>
</feature>
<feature type="binding site" evidence="1">
    <location>
        <position position="165"/>
    </location>
    <ligand>
        <name>L-tyrosine</name>
        <dbReference type="ChEBI" id="CHEBI:58315"/>
    </ligand>
</feature>
<feature type="binding site" evidence="1">
    <location>
        <position position="180"/>
    </location>
    <ligand>
        <name>L-tyrosine</name>
        <dbReference type="ChEBI" id="CHEBI:58315"/>
    </ligand>
</feature>
<feature type="binding site" evidence="1">
    <location>
        <position position="218"/>
    </location>
    <ligand>
        <name>ATP</name>
        <dbReference type="ChEBI" id="CHEBI:30616"/>
    </ligand>
</feature>
<keyword id="KW-0030">Aminoacyl-tRNA synthetase</keyword>
<keyword id="KW-0067">ATP-binding</keyword>
<keyword id="KW-0963">Cytoplasm</keyword>
<keyword id="KW-0436">Ligase</keyword>
<keyword id="KW-0547">Nucleotide-binding</keyword>
<keyword id="KW-0648">Protein biosynthesis</keyword>
<keyword id="KW-1185">Reference proteome</keyword>
<organism>
    <name type="scientific">Methanopyrus kandleri (strain AV19 / DSM 6324 / JCM 9639 / NBRC 100938)</name>
    <dbReference type="NCBI Taxonomy" id="190192"/>
    <lineage>
        <taxon>Archaea</taxon>
        <taxon>Methanobacteriati</taxon>
        <taxon>Methanobacteriota</taxon>
        <taxon>Methanomada group</taxon>
        <taxon>Methanopyri</taxon>
        <taxon>Methanopyrales</taxon>
        <taxon>Methanopyraceae</taxon>
        <taxon>Methanopyrus</taxon>
    </lineage>
</organism>
<comment type="function">
    <text evidence="1">Catalyzes the attachment of tyrosine to tRNA(Tyr) in a two-step reaction: tyrosine is first activated by ATP to form Tyr-AMP and then transferred to the acceptor end of tRNA(Tyr).</text>
</comment>
<comment type="catalytic activity">
    <reaction evidence="1">
        <text>tRNA(Tyr) + L-tyrosine + ATP = L-tyrosyl-tRNA(Tyr) + AMP + diphosphate + H(+)</text>
        <dbReference type="Rhea" id="RHEA:10220"/>
        <dbReference type="Rhea" id="RHEA-COMP:9706"/>
        <dbReference type="Rhea" id="RHEA-COMP:9707"/>
        <dbReference type="ChEBI" id="CHEBI:15378"/>
        <dbReference type="ChEBI" id="CHEBI:30616"/>
        <dbReference type="ChEBI" id="CHEBI:33019"/>
        <dbReference type="ChEBI" id="CHEBI:58315"/>
        <dbReference type="ChEBI" id="CHEBI:78442"/>
        <dbReference type="ChEBI" id="CHEBI:78536"/>
        <dbReference type="ChEBI" id="CHEBI:456215"/>
        <dbReference type="EC" id="6.1.1.1"/>
    </reaction>
</comment>
<comment type="subunit">
    <text evidence="1">Homodimer.</text>
</comment>
<comment type="subcellular location">
    <subcellularLocation>
        <location evidence="1">Cytoplasm</location>
    </subcellularLocation>
</comment>
<comment type="similarity">
    <text evidence="1">Belongs to the class-I aminoacyl-tRNA synthetase family. TyrS type 3 subfamily.</text>
</comment>
<evidence type="ECO:0000255" key="1">
    <source>
        <dbReference type="HAMAP-Rule" id="MF_02008"/>
    </source>
</evidence>
<name>SYY_METKA</name>
<protein>
    <recommendedName>
        <fullName evidence="1">Tyrosine--tRNA ligase</fullName>
        <ecNumber evidence="1">6.1.1.1</ecNumber>
    </recommendedName>
    <alternativeName>
        <fullName evidence="1">Tyrosyl-tRNA synthetase</fullName>
        <shortName evidence="1">TyrRS</shortName>
    </alternativeName>
</protein>